<evidence type="ECO:0000255" key="1">
    <source>
        <dbReference type="HAMAP-Rule" id="MF_01642"/>
    </source>
</evidence>
<evidence type="ECO:0000269" key="2">
    <source>
    </source>
</evidence>
<evidence type="ECO:0000303" key="3">
    <source>
    </source>
</evidence>
<keyword id="KW-0032">Aminotransferase</keyword>
<keyword id="KW-0663">Pyridoxal phosphate</keyword>
<keyword id="KW-0808">Transferase</keyword>
<feature type="chain" id="PRO_0000342248" description="LL-diaminopimelate aminotransferase">
    <location>
        <begin position="1"/>
        <end position="408"/>
    </location>
</feature>
<feature type="binding site" evidence="1">
    <location>
        <position position="15"/>
    </location>
    <ligand>
        <name>substrate</name>
    </ligand>
</feature>
<feature type="binding site" evidence="1">
    <location>
        <position position="42"/>
    </location>
    <ligand>
        <name>substrate</name>
    </ligand>
</feature>
<feature type="binding site" evidence="1">
    <location>
        <position position="72"/>
    </location>
    <ligand>
        <name>pyridoxal 5'-phosphate</name>
        <dbReference type="ChEBI" id="CHEBI:597326"/>
    </ligand>
</feature>
<feature type="binding site" evidence="1">
    <location>
        <begin position="108"/>
        <end position="109"/>
    </location>
    <ligand>
        <name>pyridoxal 5'-phosphate</name>
        <dbReference type="ChEBI" id="CHEBI:597326"/>
    </ligand>
</feature>
<feature type="binding site" evidence="1">
    <location>
        <position position="109"/>
    </location>
    <ligand>
        <name>substrate</name>
    </ligand>
</feature>
<feature type="binding site" evidence="1">
    <location>
        <position position="132"/>
    </location>
    <ligand>
        <name>pyridoxal 5'-phosphate</name>
        <dbReference type="ChEBI" id="CHEBI:597326"/>
    </ligand>
</feature>
<feature type="binding site" evidence="1">
    <location>
        <position position="132"/>
    </location>
    <ligand>
        <name>substrate</name>
    </ligand>
</feature>
<feature type="binding site" evidence="1">
    <location>
        <position position="187"/>
    </location>
    <ligand>
        <name>pyridoxal 5'-phosphate</name>
        <dbReference type="ChEBI" id="CHEBI:597326"/>
    </ligand>
</feature>
<feature type="binding site" evidence="1">
    <location>
        <position position="187"/>
    </location>
    <ligand>
        <name>substrate</name>
    </ligand>
</feature>
<feature type="binding site" evidence="1">
    <location>
        <position position="218"/>
    </location>
    <ligand>
        <name>pyridoxal 5'-phosphate</name>
        <dbReference type="ChEBI" id="CHEBI:597326"/>
    </ligand>
</feature>
<feature type="binding site" evidence="1">
    <location>
        <begin position="246"/>
        <end position="248"/>
    </location>
    <ligand>
        <name>pyridoxal 5'-phosphate</name>
        <dbReference type="ChEBI" id="CHEBI:597326"/>
    </ligand>
</feature>
<feature type="binding site" evidence="1">
    <location>
        <position position="257"/>
    </location>
    <ligand>
        <name>pyridoxal 5'-phosphate</name>
        <dbReference type="ChEBI" id="CHEBI:597326"/>
    </ligand>
</feature>
<feature type="binding site" evidence="1">
    <location>
        <position position="292"/>
    </location>
    <ligand>
        <name>pyridoxal 5'-phosphate</name>
        <dbReference type="ChEBI" id="CHEBI:597326"/>
    </ligand>
</feature>
<feature type="binding site" evidence="1">
    <location>
        <position position="292"/>
    </location>
    <ligand>
        <name>substrate</name>
    </ligand>
</feature>
<feature type="binding site" evidence="1">
    <location>
        <position position="388"/>
    </location>
    <ligand>
        <name>substrate</name>
    </ligand>
</feature>
<feature type="modified residue" description="N6-(pyridoxal phosphate)lysine" evidence="1">
    <location>
        <position position="249"/>
    </location>
</feature>
<dbReference type="EC" id="2.6.1.83" evidence="1 2"/>
<dbReference type="EMBL" id="AE016823">
    <property type="protein sequence ID" value="AAS71394.1"/>
    <property type="molecule type" value="Genomic_DNA"/>
</dbReference>
<dbReference type="RefSeq" id="WP_001284168.1">
    <property type="nucleotide sequence ID" value="NC_005823.1"/>
</dbReference>
<dbReference type="SMR" id="Q72NJ3"/>
<dbReference type="KEGG" id="lic:LIC_12841"/>
<dbReference type="HOGENOM" id="CLU_051433_0_0_12"/>
<dbReference type="BRENDA" id="2.6.1.83">
    <property type="organism ID" value="2986"/>
</dbReference>
<dbReference type="SABIO-RK" id="Q72NJ3"/>
<dbReference type="UniPathway" id="UPA00034">
    <property type="reaction ID" value="UER00466"/>
</dbReference>
<dbReference type="Proteomes" id="UP000007037">
    <property type="component" value="Chromosome I"/>
</dbReference>
<dbReference type="GO" id="GO:0010285">
    <property type="term" value="F:L,L-diaminopimelate aminotransferase activity"/>
    <property type="evidence" value="ECO:0007669"/>
    <property type="project" value="UniProtKB-UniRule"/>
</dbReference>
<dbReference type="GO" id="GO:0030170">
    <property type="term" value="F:pyridoxal phosphate binding"/>
    <property type="evidence" value="ECO:0007669"/>
    <property type="project" value="UniProtKB-UniRule"/>
</dbReference>
<dbReference type="GO" id="GO:0033362">
    <property type="term" value="P:lysine biosynthetic process via diaminopimelate, diaminopimelate-aminotransferase pathway"/>
    <property type="evidence" value="ECO:0007669"/>
    <property type="project" value="UniProtKB-UniRule"/>
</dbReference>
<dbReference type="CDD" id="cd00609">
    <property type="entry name" value="AAT_like"/>
    <property type="match status" value="1"/>
</dbReference>
<dbReference type="FunFam" id="3.40.640.10:FF:000099">
    <property type="entry name" value="LL-diaminopimelate aminotransferase, chloroplastic"/>
    <property type="match status" value="1"/>
</dbReference>
<dbReference type="Gene3D" id="3.90.1150.10">
    <property type="entry name" value="Aspartate Aminotransferase, domain 1"/>
    <property type="match status" value="1"/>
</dbReference>
<dbReference type="Gene3D" id="3.40.640.10">
    <property type="entry name" value="Type I PLP-dependent aspartate aminotransferase-like (Major domain)"/>
    <property type="match status" value="1"/>
</dbReference>
<dbReference type="HAMAP" id="MF_01642">
    <property type="entry name" value="DapL_aminotrans_1"/>
    <property type="match status" value="1"/>
</dbReference>
<dbReference type="InterPro" id="IPR004839">
    <property type="entry name" value="Aminotransferase_I/II_large"/>
</dbReference>
<dbReference type="InterPro" id="IPR019942">
    <property type="entry name" value="DapL/ALD1"/>
</dbReference>
<dbReference type="InterPro" id="IPR015424">
    <property type="entry name" value="PyrdxlP-dep_Trfase"/>
</dbReference>
<dbReference type="InterPro" id="IPR015421">
    <property type="entry name" value="PyrdxlP-dep_Trfase_major"/>
</dbReference>
<dbReference type="InterPro" id="IPR015422">
    <property type="entry name" value="PyrdxlP-dep_Trfase_small"/>
</dbReference>
<dbReference type="NCBIfam" id="TIGR03542">
    <property type="entry name" value="DAPAT_plant"/>
    <property type="match status" value="1"/>
</dbReference>
<dbReference type="PANTHER" id="PTHR43144">
    <property type="entry name" value="AMINOTRANSFERASE"/>
    <property type="match status" value="1"/>
</dbReference>
<dbReference type="Pfam" id="PF00155">
    <property type="entry name" value="Aminotran_1_2"/>
    <property type="match status" value="1"/>
</dbReference>
<dbReference type="SUPFAM" id="SSF53383">
    <property type="entry name" value="PLP-dependent transferases"/>
    <property type="match status" value="1"/>
</dbReference>
<sequence>MANINENYLKLKAGYLFPEISKRVKIYSEKNPSAKIIRLGIGDVTLPIVPSVVDAMVEASKEMGTVGGFHGYGPEQGYSFLLKSIADHDYGSLGIKIDESEIFVSDGSKCDCGNIQEIFSTDSKIAVADPVYPVYVDTNVMAGRTGEIGPDGRYSNLIYMPATKENGFQPEIPKEKADIVYLCYPNNPTGTVTTKESLKAWVEYAKKNNSIILYDSAYEAFISEPGVPRSIYEVEGAKEVAIEFRSFSKTAGFTGLRCAYIVIPKELKGRTRSGEEVSLNSLWNRRHTTKFNGVSYVTQKGAEACYSPQGKKEIQTSIAYYMANASKIRDGLKKAGYEVFGGVNAPYIWLKTSDNLSSWDFFDKLLNKAQVVGTPGSGFGPAGEGYFRLSAFGKKEDVEEAIARITSL</sequence>
<name>DAPAT_LEPIC</name>
<proteinExistence type="evidence at protein level"/>
<organism>
    <name type="scientific">Leptospira interrogans serogroup Icterohaemorrhagiae serovar copenhageni (strain Fiocruz L1-130)</name>
    <dbReference type="NCBI Taxonomy" id="267671"/>
    <lineage>
        <taxon>Bacteria</taxon>
        <taxon>Pseudomonadati</taxon>
        <taxon>Spirochaetota</taxon>
        <taxon>Spirochaetia</taxon>
        <taxon>Leptospirales</taxon>
        <taxon>Leptospiraceae</taxon>
        <taxon>Leptospira</taxon>
    </lineage>
</organism>
<accession>Q72NJ3</accession>
<reference key="1">
    <citation type="journal article" date="2004" name="J. Bacteriol.">
        <title>Comparative genomics of two Leptospira interrogans serovars reveals novel insights into physiology and pathogenesis.</title>
        <authorList>
            <person name="Nascimento A.L.T.O."/>
            <person name="Ko A.I."/>
            <person name="Martins E.A.L."/>
            <person name="Monteiro-Vitorello C.B."/>
            <person name="Ho P.L."/>
            <person name="Haake D.A."/>
            <person name="Verjovski-Almeida S."/>
            <person name="Hartskeerl R.A."/>
            <person name="Marques M.V."/>
            <person name="Oliveira M.C."/>
            <person name="Menck C.F.M."/>
            <person name="Leite L.C.C."/>
            <person name="Carrer H."/>
            <person name="Coutinho L.L."/>
            <person name="Degrave W.M."/>
            <person name="Dellagostin O.A."/>
            <person name="El-Dorry H."/>
            <person name="Ferro E.S."/>
            <person name="Ferro M.I.T."/>
            <person name="Furlan L.R."/>
            <person name="Gamberini M."/>
            <person name="Giglioti E.A."/>
            <person name="Goes-Neto A."/>
            <person name="Goldman G.H."/>
            <person name="Goldman M.H.S."/>
            <person name="Harakava R."/>
            <person name="Jeronimo S.M.B."/>
            <person name="Junqueira-de-Azevedo I.L.M."/>
            <person name="Kimura E.T."/>
            <person name="Kuramae E.E."/>
            <person name="Lemos E.G.M."/>
            <person name="Lemos M.V.F."/>
            <person name="Marino C.L."/>
            <person name="Nunes L.R."/>
            <person name="de Oliveira R.C."/>
            <person name="Pereira G.G."/>
            <person name="Reis M.S."/>
            <person name="Schriefer A."/>
            <person name="Siqueira W.J."/>
            <person name="Sommer P."/>
            <person name="Tsai S.M."/>
            <person name="Simpson A.J.G."/>
            <person name="Ferro J.A."/>
            <person name="Camargo L.E.A."/>
            <person name="Kitajima J.P."/>
            <person name="Setubal J.C."/>
            <person name="Van Sluys M.A."/>
        </authorList>
    </citation>
    <scope>NUCLEOTIDE SEQUENCE [LARGE SCALE GENOMIC DNA]</scope>
    <source>
        <strain>Fiocruz L1-130</strain>
    </source>
</reference>
<reference key="2">
    <citation type="journal article" date="2008" name="J. Bacteriol.">
        <title>Biochemical and phylogenetic characterization of a novel diaminopimelate biosynthesis pathway in prokaryotes identifies a diverged form of LL-diaminopimelate aminotransferase.</title>
        <authorList>
            <person name="Hudson A.O."/>
            <person name="Gilvarg C."/>
            <person name="Leustek T."/>
        </authorList>
    </citation>
    <scope>FUNCTION</scope>
    <scope>CATALYTIC ACTIVITY</scope>
    <scope>BIOPHYSICOCHEMICAL PROPERTIES</scope>
    <scope>SUBSTRATE SPECIFICITY</scope>
    <scope>PATHWAY</scope>
    <source>
        <strain>Fiocruz L1-130</strain>
    </source>
</reference>
<gene>
    <name evidence="1" type="primary">dapL</name>
    <name type="ordered locus">LIC_12841</name>
</gene>
<comment type="function">
    <text evidence="2">Involved in the synthesis of meso-diaminopimelate (m-DAP or DL-DAP), required for both lysine and peptidoglycan biosynthesis. Catalyzes the direct conversion of tetrahydrodipicolinate to LL-diaminopimelate. Is also able to catalyze the reverse reaction in vitro, i.e. the transamination of LL-diaminopimelate with 2-oxoglutarate to produce tetrahydrodipicolinate and glutamate. Cannot use m-DAP, lysine or ornithine as the amino-group donor, when using 2-oxoglutarate as the amino-group acceptor. Cannot use pyruvate, indole 3-pyruvate, oxaloacetate or phenyl pyruvate as the amino-group acceptor, when using LL-DAP as the amino-group donor.</text>
</comment>
<comment type="catalytic activity">
    <reaction evidence="1 2">
        <text>(2S,6S)-2,6-diaminopimelate + 2-oxoglutarate = (S)-2,3,4,5-tetrahydrodipicolinate + L-glutamate + H2O + H(+)</text>
        <dbReference type="Rhea" id="RHEA:23988"/>
        <dbReference type="ChEBI" id="CHEBI:15377"/>
        <dbReference type="ChEBI" id="CHEBI:15378"/>
        <dbReference type="ChEBI" id="CHEBI:16810"/>
        <dbReference type="ChEBI" id="CHEBI:16845"/>
        <dbReference type="ChEBI" id="CHEBI:29985"/>
        <dbReference type="ChEBI" id="CHEBI:57609"/>
        <dbReference type="EC" id="2.6.1.83"/>
    </reaction>
</comment>
<comment type="cofactor">
    <cofactor evidence="1">
        <name>pyridoxal 5'-phosphate</name>
        <dbReference type="ChEBI" id="CHEBI:597326"/>
    </cofactor>
</comment>
<comment type="biophysicochemical properties">
    <kinetics>
        <KM evidence="2">37 uM for LL-2,6-diaminopimelate</KM>
        <KM evidence="2">14 uM for L-2,3,4,5-tetrahydrodipicolinate</KM>
        <KM evidence="2">0.4 mM for 2-oxoglutarate</KM>
        <KM evidence="2">4.3 mM for glutamate</KM>
        <Vmax evidence="2">10.6 umol/min/mg enzyme for the forward reaction (tetrahydrodipicolinate synthesis)</Vmax>
        <Vmax evidence="2">0.45 umol/min/mg enzyme for the reverse reaction (LL-DAP synthesis)</Vmax>
    </kinetics>
</comment>
<comment type="pathway">
    <text evidence="1 2">Amino-acid biosynthesis; L-lysine biosynthesis via DAP pathway; LL-2,6-diaminopimelate from (S)-tetrahydrodipicolinate (aminotransferase route): step 1/1.</text>
</comment>
<comment type="subunit">
    <text evidence="1">Homodimer.</text>
</comment>
<comment type="similarity">
    <text evidence="1">Belongs to the class-I pyridoxal-phosphate-dependent aminotransferase family. LL-diaminopimelate aminotransferase subfamily.</text>
</comment>
<protein>
    <recommendedName>
        <fullName evidence="1 3">LL-diaminopimelate aminotransferase</fullName>
        <shortName evidence="1 3">DAP-AT</shortName>
        <shortName evidence="1 3">DAP-aminotransferase</shortName>
        <shortName evidence="1 3">LL-DAP-aminotransferase</shortName>
        <ecNumber evidence="1 2">2.6.1.83</ecNumber>
    </recommendedName>
</protein>